<feature type="chain" id="PRO_1000045346" description="Probable transcriptional regulatory protein Neut_0281">
    <location>
        <begin position="1"/>
        <end position="241"/>
    </location>
</feature>
<dbReference type="EMBL" id="CP000450">
    <property type="protein sequence ID" value="ABI58565.1"/>
    <property type="molecule type" value="Genomic_DNA"/>
</dbReference>
<dbReference type="RefSeq" id="WP_011633409.1">
    <property type="nucleotide sequence ID" value="NC_008344.1"/>
</dbReference>
<dbReference type="SMR" id="Q0AJA6"/>
<dbReference type="STRING" id="335283.Neut_0281"/>
<dbReference type="KEGG" id="net:Neut_0281"/>
<dbReference type="eggNOG" id="COG0217">
    <property type="taxonomic scope" value="Bacteria"/>
</dbReference>
<dbReference type="HOGENOM" id="CLU_062974_2_2_4"/>
<dbReference type="OrthoDB" id="9781053at2"/>
<dbReference type="Proteomes" id="UP000001966">
    <property type="component" value="Chromosome"/>
</dbReference>
<dbReference type="GO" id="GO:0005829">
    <property type="term" value="C:cytosol"/>
    <property type="evidence" value="ECO:0007669"/>
    <property type="project" value="TreeGrafter"/>
</dbReference>
<dbReference type="GO" id="GO:0003677">
    <property type="term" value="F:DNA binding"/>
    <property type="evidence" value="ECO:0007669"/>
    <property type="project" value="UniProtKB-UniRule"/>
</dbReference>
<dbReference type="GO" id="GO:0006355">
    <property type="term" value="P:regulation of DNA-templated transcription"/>
    <property type="evidence" value="ECO:0007669"/>
    <property type="project" value="UniProtKB-UniRule"/>
</dbReference>
<dbReference type="FunFam" id="1.10.10.200:FF:000001">
    <property type="entry name" value="Probable transcriptional regulatory protein YebC"/>
    <property type="match status" value="1"/>
</dbReference>
<dbReference type="FunFam" id="3.30.70.980:FF:000002">
    <property type="entry name" value="Probable transcriptional regulatory protein YebC"/>
    <property type="match status" value="1"/>
</dbReference>
<dbReference type="Gene3D" id="1.10.10.200">
    <property type="match status" value="1"/>
</dbReference>
<dbReference type="Gene3D" id="3.30.70.980">
    <property type="match status" value="2"/>
</dbReference>
<dbReference type="HAMAP" id="MF_00693">
    <property type="entry name" value="Transcrip_reg_TACO1"/>
    <property type="match status" value="1"/>
</dbReference>
<dbReference type="InterPro" id="IPR017856">
    <property type="entry name" value="Integrase-like_N"/>
</dbReference>
<dbReference type="InterPro" id="IPR048300">
    <property type="entry name" value="TACO1_YebC-like_2nd/3rd_dom"/>
</dbReference>
<dbReference type="InterPro" id="IPR049083">
    <property type="entry name" value="TACO1_YebC_N"/>
</dbReference>
<dbReference type="InterPro" id="IPR002876">
    <property type="entry name" value="Transcrip_reg_TACO1-like"/>
</dbReference>
<dbReference type="InterPro" id="IPR026564">
    <property type="entry name" value="Transcrip_reg_TACO1-like_dom3"/>
</dbReference>
<dbReference type="InterPro" id="IPR029072">
    <property type="entry name" value="YebC-like"/>
</dbReference>
<dbReference type="NCBIfam" id="NF001030">
    <property type="entry name" value="PRK00110.1"/>
    <property type="match status" value="1"/>
</dbReference>
<dbReference type="NCBIfam" id="NF009044">
    <property type="entry name" value="PRK12378.1"/>
    <property type="match status" value="1"/>
</dbReference>
<dbReference type="NCBIfam" id="TIGR01033">
    <property type="entry name" value="YebC/PmpR family DNA-binding transcriptional regulator"/>
    <property type="match status" value="1"/>
</dbReference>
<dbReference type="PANTHER" id="PTHR12532:SF6">
    <property type="entry name" value="TRANSCRIPTIONAL REGULATORY PROTEIN YEBC-RELATED"/>
    <property type="match status" value="1"/>
</dbReference>
<dbReference type="PANTHER" id="PTHR12532">
    <property type="entry name" value="TRANSLATIONAL ACTIVATOR OF CYTOCHROME C OXIDASE 1"/>
    <property type="match status" value="1"/>
</dbReference>
<dbReference type="Pfam" id="PF20772">
    <property type="entry name" value="TACO1_YebC_N"/>
    <property type="match status" value="1"/>
</dbReference>
<dbReference type="Pfam" id="PF01709">
    <property type="entry name" value="Transcrip_reg"/>
    <property type="match status" value="1"/>
</dbReference>
<dbReference type="SUPFAM" id="SSF75625">
    <property type="entry name" value="YebC-like"/>
    <property type="match status" value="1"/>
</dbReference>
<proteinExistence type="inferred from homology"/>
<keyword id="KW-0963">Cytoplasm</keyword>
<keyword id="KW-0238">DNA-binding</keyword>
<keyword id="KW-0804">Transcription</keyword>
<keyword id="KW-0805">Transcription regulation</keyword>
<evidence type="ECO:0000255" key="1">
    <source>
        <dbReference type="HAMAP-Rule" id="MF_00693"/>
    </source>
</evidence>
<protein>
    <recommendedName>
        <fullName evidence="1">Probable transcriptional regulatory protein Neut_0281</fullName>
    </recommendedName>
</protein>
<accession>Q0AJA6</accession>
<name>Y281_NITEC</name>
<comment type="subcellular location">
    <subcellularLocation>
        <location evidence="1">Cytoplasm</location>
    </subcellularLocation>
</comment>
<comment type="similarity">
    <text evidence="1">Belongs to the TACO1 family.</text>
</comment>
<gene>
    <name type="ordered locus">Neut_0281</name>
</gene>
<sequence length="241" mass="26319">MAGHSKWANIKHKKAAQDAKRGKIFTRLIKEITVAARLGGGDPGSNPRLRLAMDKAFGHNMPKDNVERAIKRGCGELEGVNYEEIRYEGYGVSGAAVMVDCMTDNRTRTVADVRHAFTKHGGNLGTDGSVSYLFTHCGQLLFAPDIDEARLLEVALNAGAEDVIDNDDGSLEVITSPDTFVAVRDELEKAAFKAELAEVTWKPENEILLQGDDAAKMQKLLDALEDIDDVQDVYTTAVLDI</sequence>
<reference key="1">
    <citation type="journal article" date="2007" name="Environ. Microbiol.">
        <title>Whole-genome analysis of the ammonia-oxidizing bacterium, Nitrosomonas eutropha C91: implications for niche adaptation.</title>
        <authorList>
            <person name="Stein L.Y."/>
            <person name="Arp D.J."/>
            <person name="Berube P.M."/>
            <person name="Chain P.S."/>
            <person name="Hauser L."/>
            <person name="Jetten M.S."/>
            <person name="Klotz M.G."/>
            <person name="Larimer F.W."/>
            <person name="Norton J.M."/>
            <person name="Op den Camp H.J.M."/>
            <person name="Shin M."/>
            <person name="Wei X."/>
        </authorList>
    </citation>
    <scope>NUCLEOTIDE SEQUENCE [LARGE SCALE GENOMIC DNA]</scope>
    <source>
        <strain>DSM 101675 / C91 / Nm57</strain>
    </source>
</reference>
<organism>
    <name type="scientific">Nitrosomonas eutropha (strain DSM 101675 / C91 / Nm57)</name>
    <dbReference type="NCBI Taxonomy" id="335283"/>
    <lineage>
        <taxon>Bacteria</taxon>
        <taxon>Pseudomonadati</taxon>
        <taxon>Pseudomonadota</taxon>
        <taxon>Betaproteobacteria</taxon>
        <taxon>Nitrosomonadales</taxon>
        <taxon>Nitrosomonadaceae</taxon>
        <taxon>Nitrosomonas</taxon>
    </lineage>
</organism>